<feature type="initiator methionine" description="Removed" evidence="2">
    <location>
        <position position="1"/>
    </location>
</feature>
<feature type="chain" id="PRO_0000064167" description="Peptidyl-prolyl cis-trans isomerase-like 3">
    <location>
        <begin position="2"/>
        <end position="161"/>
    </location>
</feature>
<feature type="domain" description="PPIase cyclophilin-type" evidence="3">
    <location>
        <begin position="2"/>
        <end position="154"/>
    </location>
</feature>
<feature type="modified residue" description="N-acetylserine" evidence="2">
    <location>
        <position position="2"/>
    </location>
</feature>
<feature type="modified residue" description="Omega-N-methylarginine" evidence="6">
    <location>
        <position position="61"/>
    </location>
</feature>
<feature type="splice variant" id="VSP_015469" description="In isoform 2." evidence="4">
    <location>
        <begin position="121"/>
        <end position="161"/>
    </location>
</feature>
<feature type="sequence conflict" description="In Ref. 1; AAO32944." evidence="5" ref="1">
    <original>K</original>
    <variation>R</variation>
    <location>
        <position position="23"/>
    </location>
</feature>
<feature type="sequence conflict" description="In Ref. 2; BAB27319." evidence="5" ref="2">
    <original>I</original>
    <variation>V</variation>
    <location>
        <position position="103"/>
    </location>
</feature>
<feature type="sequence conflict" description="In Ref. 1; AAO32944." evidence="5" ref="1">
    <original>L</original>
    <variation>F</variation>
    <location>
        <position position="144"/>
    </location>
</feature>
<proteinExistence type="evidence at protein level"/>
<sequence length="161" mass="18128">MSVTLHTDVGDIKIEVFCERTPKTCENFLALCASNYYNGCVFHRNIKGFMVQTGDPTGTGRGGSSIWAKKFEDEYSEYLKHNVRGVVSMANNGPNTNGSQFFITYGKQPHLDMKYTVFGKVIDGLETLDELEKLPVNEKTYRPLNDVHIKDITIHANPFAQ</sequence>
<keyword id="KW-0007">Acetylation</keyword>
<keyword id="KW-0025">Alternative splicing</keyword>
<keyword id="KW-0413">Isomerase</keyword>
<keyword id="KW-0488">Methylation</keyword>
<keyword id="KW-0507">mRNA processing</keyword>
<keyword id="KW-0508">mRNA splicing</keyword>
<keyword id="KW-1185">Reference proteome</keyword>
<keyword id="KW-0697">Rotamase</keyword>
<keyword id="KW-0747">Spliceosome</keyword>
<accession>Q9D6L8</accession>
<accession>Q812D2</accession>
<accession>Q9CY23</accession>
<gene>
    <name type="primary">Ppil3</name>
    <name type="synonym">Cyp10l</name>
</gene>
<evidence type="ECO:0000250" key="1"/>
<evidence type="ECO:0000250" key="2">
    <source>
        <dbReference type="UniProtKB" id="Q9H2H8"/>
    </source>
</evidence>
<evidence type="ECO:0000255" key="3">
    <source>
        <dbReference type="PROSITE-ProRule" id="PRU00156"/>
    </source>
</evidence>
<evidence type="ECO:0000303" key="4">
    <source>
    </source>
</evidence>
<evidence type="ECO:0000305" key="5"/>
<evidence type="ECO:0007744" key="6">
    <source>
    </source>
</evidence>
<name>PPIL3_MOUSE</name>
<comment type="function">
    <text evidence="1">PPIases accelerate the folding of proteins. It catalyzes the cis-trans isomerization of proline imidic peptide bonds in oligopeptides. May be involved in pre-mRNA splicing (By similarity).</text>
</comment>
<comment type="catalytic activity">
    <reaction>
        <text>[protein]-peptidylproline (omega=180) = [protein]-peptidylproline (omega=0)</text>
        <dbReference type="Rhea" id="RHEA:16237"/>
        <dbReference type="Rhea" id="RHEA-COMP:10747"/>
        <dbReference type="Rhea" id="RHEA-COMP:10748"/>
        <dbReference type="ChEBI" id="CHEBI:83833"/>
        <dbReference type="ChEBI" id="CHEBI:83834"/>
        <dbReference type="EC" id="5.2.1.8"/>
    </reaction>
</comment>
<comment type="subunit">
    <text evidence="1">Identified in the spliceosome C complex.</text>
</comment>
<comment type="alternative products">
    <event type="alternative splicing"/>
    <isoform>
        <id>Q9D6L8-1</id>
        <name>1</name>
        <sequence type="displayed"/>
    </isoform>
    <isoform>
        <id>Q9D6L8-2</id>
        <name>2</name>
        <sequence type="described" ref="VSP_015469"/>
    </isoform>
</comment>
<comment type="similarity">
    <text evidence="5">Belongs to the cyclophilin-type PPIase family. PPIL3 subfamily.</text>
</comment>
<organism>
    <name type="scientific">Mus musculus</name>
    <name type="common">Mouse</name>
    <dbReference type="NCBI Taxonomy" id="10090"/>
    <lineage>
        <taxon>Eukaryota</taxon>
        <taxon>Metazoa</taxon>
        <taxon>Chordata</taxon>
        <taxon>Craniata</taxon>
        <taxon>Vertebrata</taxon>
        <taxon>Euteleostomi</taxon>
        <taxon>Mammalia</taxon>
        <taxon>Eutheria</taxon>
        <taxon>Euarchontoglires</taxon>
        <taxon>Glires</taxon>
        <taxon>Rodentia</taxon>
        <taxon>Myomorpha</taxon>
        <taxon>Muroidea</taxon>
        <taxon>Muridae</taxon>
        <taxon>Murinae</taxon>
        <taxon>Mus</taxon>
        <taxon>Mus</taxon>
    </lineage>
</organism>
<dbReference type="EC" id="5.2.1.8"/>
<dbReference type="EMBL" id="AF315803">
    <property type="protein sequence ID" value="AAO32944.1"/>
    <property type="molecule type" value="mRNA"/>
</dbReference>
<dbReference type="EMBL" id="AK010207">
    <property type="protein sequence ID" value="BAB26768.1"/>
    <property type="molecule type" value="mRNA"/>
</dbReference>
<dbReference type="EMBL" id="AK011000">
    <property type="protein sequence ID" value="BAB27319.1"/>
    <property type="molecule type" value="mRNA"/>
</dbReference>
<dbReference type="EMBL" id="BC060993">
    <property type="protein sequence ID" value="AAH60993.1"/>
    <property type="molecule type" value="mRNA"/>
</dbReference>
<dbReference type="EMBL" id="BC061645">
    <property type="protein sequence ID" value="AAH61645.1"/>
    <property type="molecule type" value="mRNA"/>
</dbReference>
<dbReference type="CCDS" id="CCDS35579.1">
    <molecule id="Q9D6L8-1"/>
</dbReference>
<dbReference type="CCDS" id="CCDS35580.1">
    <molecule id="Q9D6L8-2"/>
</dbReference>
<dbReference type="RefSeq" id="NP_001272755.1">
    <molecule id="Q9D6L8-1"/>
    <property type="nucleotide sequence ID" value="NM_001285826.1"/>
</dbReference>
<dbReference type="RefSeq" id="NP_001272756.1">
    <molecule id="Q9D6L8-1"/>
    <property type="nucleotide sequence ID" value="NM_001285827.1"/>
</dbReference>
<dbReference type="RefSeq" id="NP_081627.1">
    <molecule id="Q9D6L8-1"/>
    <property type="nucleotide sequence ID" value="NM_027351.3"/>
</dbReference>
<dbReference type="RefSeq" id="NP_081650.2">
    <molecule id="Q9D6L8-2"/>
    <property type="nucleotide sequence ID" value="NM_027374.3"/>
</dbReference>
<dbReference type="RefSeq" id="XP_030098742.1">
    <molecule id="Q9D6L8-1"/>
    <property type="nucleotide sequence ID" value="XM_030242882.2"/>
</dbReference>
<dbReference type="RefSeq" id="XP_030098746.1">
    <molecule id="Q9D6L8-1"/>
    <property type="nucleotide sequence ID" value="XM_030242886.2"/>
</dbReference>
<dbReference type="RefSeq" id="XP_030098748.1">
    <molecule id="Q9D6L8-1"/>
    <property type="nucleotide sequence ID" value="XM_030242888.2"/>
</dbReference>
<dbReference type="SMR" id="Q9D6L8"/>
<dbReference type="BioGRID" id="213923">
    <property type="interactions" value="26"/>
</dbReference>
<dbReference type="FunCoup" id="Q9D6L8">
    <property type="interactions" value="2093"/>
</dbReference>
<dbReference type="IntAct" id="Q9D6L8">
    <property type="interactions" value="1"/>
</dbReference>
<dbReference type="STRING" id="10090.ENSMUSP00000112947"/>
<dbReference type="iPTMnet" id="Q9D6L8"/>
<dbReference type="PhosphoSitePlus" id="Q9D6L8"/>
<dbReference type="PaxDb" id="10090-ENSMUSP00000080378"/>
<dbReference type="PeptideAtlas" id="Q9D6L8"/>
<dbReference type="ProteomicsDB" id="291784">
    <molecule id="Q9D6L8-1"/>
</dbReference>
<dbReference type="ProteomicsDB" id="291785">
    <molecule id="Q9D6L8-2"/>
</dbReference>
<dbReference type="Pumba" id="Q9D6L8"/>
<dbReference type="Antibodypedia" id="34922">
    <property type="antibodies" value="231 antibodies from 23 providers"/>
</dbReference>
<dbReference type="DNASU" id="70225"/>
<dbReference type="Ensembl" id="ENSMUST00000081677.12">
    <molecule id="Q9D6L8-1"/>
    <property type="protein sequence ID" value="ENSMUSP00000080378.6"/>
    <property type="gene ID" value="ENSMUSG00000026035.16"/>
</dbReference>
<dbReference type="Ensembl" id="ENSMUST00000114345.9">
    <molecule id="Q9D6L8-2"/>
    <property type="protein sequence ID" value="ENSMUSP00000109984.3"/>
    <property type="gene ID" value="ENSMUSG00000026035.16"/>
</dbReference>
<dbReference type="Ensembl" id="ENSMUST00000114348.8">
    <molecule id="Q9D6L8-1"/>
    <property type="protein sequence ID" value="ENSMUSP00000109988.2"/>
    <property type="gene ID" value="ENSMUSG00000026035.16"/>
</dbReference>
<dbReference type="Ensembl" id="ENSMUST00000117069.8">
    <molecule id="Q9D6L8-1"/>
    <property type="protein sequence ID" value="ENSMUSP00000112947.2"/>
    <property type="gene ID" value="ENSMUSG00000026035.16"/>
</dbReference>
<dbReference type="GeneID" id="70225"/>
<dbReference type="KEGG" id="mmu:70225"/>
<dbReference type="UCSC" id="uc007bbv.2">
    <molecule id="Q9D6L8-1"/>
    <property type="organism name" value="mouse"/>
</dbReference>
<dbReference type="AGR" id="MGI:1917475"/>
<dbReference type="CTD" id="53938"/>
<dbReference type="MGI" id="MGI:1917475">
    <property type="gene designation" value="Ppil3"/>
</dbReference>
<dbReference type="VEuPathDB" id="HostDB:ENSMUSG00000026035"/>
<dbReference type="eggNOG" id="KOG0884">
    <property type="taxonomic scope" value="Eukaryota"/>
</dbReference>
<dbReference type="GeneTree" id="ENSGT00940000153189"/>
<dbReference type="HOGENOM" id="CLU_012062_16_3_1"/>
<dbReference type="InParanoid" id="Q9D6L8"/>
<dbReference type="OMA" id="VPFHRVM"/>
<dbReference type="OrthoDB" id="271386at2759"/>
<dbReference type="PhylomeDB" id="Q9D6L8"/>
<dbReference type="TreeFam" id="TF352224"/>
<dbReference type="Reactome" id="R-MMU-72163">
    <property type="pathway name" value="mRNA Splicing - Major Pathway"/>
</dbReference>
<dbReference type="BioGRID-ORCS" id="70225">
    <property type="hits" value="3 hits in 79 CRISPR screens"/>
</dbReference>
<dbReference type="ChiTaRS" id="Ppil3">
    <property type="organism name" value="mouse"/>
</dbReference>
<dbReference type="PRO" id="PR:Q9D6L8"/>
<dbReference type="Proteomes" id="UP000000589">
    <property type="component" value="Chromosome 1"/>
</dbReference>
<dbReference type="RNAct" id="Q9D6L8">
    <property type="molecule type" value="protein"/>
</dbReference>
<dbReference type="Bgee" id="ENSMUSG00000026035">
    <property type="expression patterns" value="Expressed in facial nucleus and 223 other cell types or tissues"/>
</dbReference>
<dbReference type="ExpressionAtlas" id="Q9D6L8">
    <property type="expression patterns" value="baseline and differential"/>
</dbReference>
<dbReference type="GO" id="GO:0071013">
    <property type="term" value="C:catalytic step 2 spliceosome"/>
    <property type="evidence" value="ECO:0007669"/>
    <property type="project" value="Ensembl"/>
</dbReference>
<dbReference type="GO" id="GO:0003755">
    <property type="term" value="F:peptidyl-prolyl cis-trans isomerase activity"/>
    <property type="evidence" value="ECO:0007669"/>
    <property type="project" value="UniProtKB-KW"/>
</dbReference>
<dbReference type="GO" id="GO:0006397">
    <property type="term" value="P:mRNA processing"/>
    <property type="evidence" value="ECO:0007669"/>
    <property type="project" value="UniProtKB-KW"/>
</dbReference>
<dbReference type="GO" id="GO:0006457">
    <property type="term" value="P:protein folding"/>
    <property type="evidence" value="ECO:0007669"/>
    <property type="project" value="InterPro"/>
</dbReference>
<dbReference type="GO" id="GO:0008380">
    <property type="term" value="P:RNA splicing"/>
    <property type="evidence" value="ECO:0007669"/>
    <property type="project" value="UniProtKB-KW"/>
</dbReference>
<dbReference type="CDD" id="cd01928">
    <property type="entry name" value="Cyclophilin_PPIL3_like"/>
    <property type="match status" value="1"/>
</dbReference>
<dbReference type="FunFam" id="2.40.100.10:FF:000012">
    <property type="entry name" value="Peptidyl-prolyl cis-trans isomerase"/>
    <property type="match status" value="1"/>
</dbReference>
<dbReference type="Gene3D" id="2.40.100.10">
    <property type="entry name" value="Cyclophilin-like"/>
    <property type="match status" value="1"/>
</dbReference>
<dbReference type="InterPro" id="IPR029000">
    <property type="entry name" value="Cyclophilin-like_dom_sf"/>
</dbReference>
<dbReference type="InterPro" id="IPR024936">
    <property type="entry name" value="Cyclophilin-type_PPIase"/>
</dbReference>
<dbReference type="InterPro" id="IPR020892">
    <property type="entry name" value="Cyclophilin-type_PPIase_CS"/>
</dbReference>
<dbReference type="InterPro" id="IPR002130">
    <property type="entry name" value="Cyclophilin-type_PPIase_dom"/>
</dbReference>
<dbReference type="InterPro" id="IPR044666">
    <property type="entry name" value="Cyclophilin_A-like"/>
</dbReference>
<dbReference type="PANTHER" id="PTHR45625:SF2">
    <property type="entry name" value="PEPTIDYL-PROLYL CIS-TRANS ISOMERASE-LIKE 3"/>
    <property type="match status" value="1"/>
</dbReference>
<dbReference type="PANTHER" id="PTHR45625">
    <property type="entry name" value="PEPTIDYL-PROLYL CIS-TRANS ISOMERASE-RELATED"/>
    <property type="match status" value="1"/>
</dbReference>
<dbReference type="Pfam" id="PF00160">
    <property type="entry name" value="Pro_isomerase"/>
    <property type="match status" value="1"/>
</dbReference>
<dbReference type="PIRSF" id="PIRSF001467">
    <property type="entry name" value="Peptidylpro_ismrse"/>
    <property type="match status" value="1"/>
</dbReference>
<dbReference type="PRINTS" id="PR00153">
    <property type="entry name" value="CSAPPISMRASE"/>
</dbReference>
<dbReference type="SUPFAM" id="SSF50891">
    <property type="entry name" value="Cyclophilin-like"/>
    <property type="match status" value="1"/>
</dbReference>
<dbReference type="PROSITE" id="PS00170">
    <property type="entry name" value="CSA_PPIASE_1"/>
    <property type="match status" value="1"/>
</dbReference>
<dbReference type="PROSITE" id="PS50072">
    <property type="entry name" value="CSA_PPIASE_2"/>
    <property type="match status" value="1"/>
</dbReference>
<protein>
    <recommendedName>
        <fullName>Peptidyl-prolyl cis-trans isomerase-like 3</fullName>
        <shortName>PPIase</shortName>
        <ecNumber>5.2.1.8</ecNumber>
    </recommendedName>
    <alternativeName>
        <fullName>CYP10L</fullName>
    </alternativeName>
    <alternativeName>
        <fullName>Cyclophilin-like protein PPIL3</fullName>
    </alternativeName>
    <alternativeName>
        <fullName>Rotamase PPIL3</fullName>
    </alternativeName>
</protein>
<reference key="1">
    <citation type="submission" date="2000-10" db="EMBL/GenBank/DDBJ databases">
        <authorList>
            <person name="Yu L."/>
        </authorList>
    </citation>
    <scope>NUCLEOTIDE SEQUENCE [MRNA] (ISOFORM 1)</scope>
</reference>
<reference key="2">
    <citation type="journal article" date="2005" name="Science">
        <title>The transcriptional landscape of the mammalian genome.</title>
        <authorList>
            <person name="Carninci P."/>
            <person name="Kasukawa T."/>
            <person name="Katayama S."/>
            <person name="Gough J."/>
            <person name="Frith M.C."/>
            <person name="Maeda N."/>
            <person name="Oyama R."/>
            <person name="Ravasi T."/>
            <person name="Lenhard B."/>
            <person name="Wells C."/>
            <person name="Kodzius R."/>
            <person name="Shimokawa K."/>
            <person name="Bajic V.B."/>
            <person name="Brenner S.E."/>
            <person name="Batalov S."/>
            <person name="Forrest A.R."/>
            <person name="Zavolan M."/>
            <person name="Davis M.J."/>
            <person name="Wilming L.G."/>
            <person name="Aidinis V."/>
            <person name="Allen J.E."/>
            <person name="Ambesi-Impiombato A."/>
            <person name="Apweiler R."/>
            <person name="Aturaliya R.N."/>
            <person name="Bailey T.L."/>
            <person name="Bansal M."/>
            <person name="Baxter L."/>
            <person name="Beisel K.W."/>
            <person name="Bersano T."/>
            <person name="Bono H."/>
            <person name="Chalk A.M."/>
            <person name="Chiu K.P."/>
            <person name="Choudhary V."/>
            <person name="Christoffels A."/>
            <person name="Clutterbuck D.R."/>
            <person name="Crowe M.L."/>
            <person name="Dalla E."/>
            <person name="Dalrymple B.P."/>
            <person name="de Bono B."/>
            <person name="Della Gatta G."/>
            <person name="di Bernardo D."/>
            <person name="Down T."/>
            <person name="Engstrom P."/>
            <person name="Fagiolini M."/>
            <person name="Faulkner G."/>
            <person name="Fletcher C.F."/>
            <person name="Fukushima T."/>
            <person name="Furuno M."/>
            <person name="Futaki S."/>
            <person name="Gariboldi M."/>
            <person name="Georgii-Hemming P."/>
            <person name="Gingeras T.R."/>
            <person name="Gojobori T."/>
            <person name="Green R.E."/>
            <person name="Gustincich S."/>
            <person name="Harbers M."/>
            <person name="Hayashi Y."/>
            <person name="Hensch T.K."/>
            <person name="Hirokawa N."/>
            <person name="Hill D."/>
            <person name="Huminiecki L."/>
            <person name="Iacono M."/>
            <person name="Ikeo K."/>
            <person name="Iwama A."/>
            <person name="Ishikawa T."/>
            <person name="Jakt M."/>
            <person name="Kanapin A."/>
            <person name="Katoh M."/>
            <person name="Kawasawa Y."/>
            <person name="Kelso J."/>
            <person name="Kitamura H."/>
            <person name="Kitano H."/>
            <person name="Kollias G."/>
            <person name="Krishnan S.P."/>
            <person name="Kruger A."/>
            <person name="Kummerfeld S.K."/>
            <person name="Kurochkin I.V."/>
            <person name="Lareau L.F."/>
            <person name="Lazarevic D."/>
            <person name="Lipovich L."/>
            <person name="Liu J."/>
            <person name="Liuni S."/>
            <person name="McWilliam S."/>
            <person name="Madan Babu M."/>
            <person name="Madera M."/>
            <person name="Marchionni L."/>
            <person name="Matsuda H."/>
            <person name="Matsuzawa S."/>
            <person name="Miki H."/>
            <person name="Mignone F."/>
            <person name="Miyake S."/>
            <person name="Morris K."/>
            <person name="Mottagui-Tabar S."/>
            <person name="Mulder N."/>
            <person name="Nakano N."/>
            <person name="Nakauchi H."/>
            <person name="Ng P."/>
            <person name="Nilsson R."/>
            <person name="Nishiguchi S."/>
            <person name="Nishikawa S."/>
            <person name="Nori F."/>
            <person name="Ohara O."/>
            <person name="Okazaki Y."/>
            <person name="Orlando V."/>
            <person name="Pang K.C."/>
            <person name="Pavan W.J."/>
            <person name="Pavesi G."/>
            <person name="Pesole G."/>
            <person name="Petrovsky N."/>
            <person name="Piazza S."/>
            <person name="Reed J."/>
            <person name="Reid J.F."/>
            <person name="Ring B.Z."/>
            <person name="Ringwald M."/>
            <person name="Rost B."/>
            <person name="Ruan Y."/>
            <person name="Salzberg S.L."/>
            <person name="Sandelin A."/>
            <person name="Schneider C."/>
            <person name="Schoenbach C."/>
            <person name="Sekiguchi K."/>
            <person name="Semple C.A."/>
            <person name="Seno S."/>
            <person name="Sessa L."/>
            <person name="Sheng Y."/>
            <person name="Shibata Y."/>
            <person name="Shimada H."/>
            <person name="Shimada K."/>
            <person name="Silva D."/>
            <person name="Sinclair B."/>
            <person name="Sperling S."/>
            <person name="Stupka E."/>
            <person name="Sugiura K."/>
            <person name="Sultana R."/>
            <person name="Takenaka Y."/>
            <person name="Taki K."/>
            <person name="Tammoja K."/>
            <person name="Tan S.L."/>
            <person name="Tang S."/>
            <person name="Taylor M.S."/>
            <person name="Tegner J."/>
            <person name="Teichmann S.A."/>
            <person name="Ueda H.R."/>
            <person name="van Nimwegen E."/>
            <person name="Verardo R."/>
            <person name="Wei C.L."/>
            <person name="Yagi K."/>
            <person name="Yamanishi H."/>
            <person name="Zabarovsky E."/>
            <person name="Zhu S."/>
            <person name="Zimmer A."/>
            <person name="Hide W."/>
            <person name="Bult C."/>
            <person name="Grimmond S.M."/>
            <person name="Teasdale R.D."/>
            <person name="Liu E.T."/>
            <person name="Brusic V."/>
            <person name="Quackenbush J."/>
            <person name="Wahlestedt C."/>
            <person name="Mattick J.S."/>
            <person name="Hume D.A."/>
            <person name="Kai C."/>
            <person name="Sasaki D."/>
            <person name="Tomaru Y."/>
            <person name="Fukuda S."/>
            <person name="Kanamori-Katayama M."/>
            <person name="Suzuki M."/>
            <person name="Aoki J."/>
            <person name="Arakawa T."/>
            <person name="Iida J."/>
            <person name="Imamura K."/>
            <person name="Itoh M."/>
            <person name="Kato T."/>
            <person name="Kawaji H."/>
            <person name="Kawagashira N."/>
            <person name="Kawashima T."/>
            <person name="Kojima M."/>
            <person name="Kondo S."/>
            <person name="Konno H."/>
            <person name="Nakano K."/>
            <person name="Ninomiya N."/>
            <person name="Nishio T."/>
            <person name="Okada M."/>
            <person name="Plessy C."/>
            <person name="Shibata K."/>
            <person name="Shiraki T."/>
            <person name="Suzuki S."/>
            <person name="Tagami M."/>
            <person name="Waki K."/>
            <person name="Watahiki A."/>
            <person name="Okamura-Oho Y."/>
            <person name="Suzuki H."/>
            <person name="Kawai J."/>
            <person name="Hayashizaki Y."/>
        </authorList>
    </citation>
    <scope>NUCLEOTIDE SEQUENCE [LARGE SCALE MRNA] (ISOFORMS 1 AND 2)</scope>
    <source>
        <strain>C57BL/6J</strain>
        <tissue>Liver</tissue>
        <tissue>Tongue</tissue>
    </source>
</reference>
<reference key="3">
    <citation type="journal article" date="2004" name="Genome Res.">
        <title>The status, quality, and expansion of the NIH full-length cDNA project: the Mammalian Gene Collection (MGC).</title>
        <authorList>
            <consortium name="The MGC Project Team"/>
        </authorList>
    </citation>
    <scope>NUCLEOTIDE SEQUENCE [LARGE SCALE MRNA] (ISOFORM 1)</scope>
    <source>
        <strain>129</strain>
        <tissue>Brain</tissue>
        <tissue>Mammary tumor</tissue>
    </source>
</reference>
<reference key="4">
    <citation type="journal article" date="2010" name="Cell">
        <title>A tissue-specific atlas of mouse protein phosphorylation and expression.</title>
        <authorList>
            <person name="Huttlin E.L."/>
            <person name="Jedrychowski M.P."/>
            <person name="Elias J.E."/>
            <person name="Goswami T."/>
            <person name="Rad R."/>
            <person name="Beausoleil S.A."/>
            <person name="Villen J."/>
            <person name="Haas W."/>
            <person name="Sowa M.E."/>
            <person name="Gygi S.P."/>
        </authorList>
    </citation>
    <scope>IDENTIFICATION BY MASS SPECTROMETRY [LARGE SCALE ANALYSIS]</scope>
    <source>
        <tissue>Brain</tissue>
        <tissue>Kidney</tissue>
        <tissue>Liver</tissue>
        <tissue>Spleen</tissue>
        <tissue>Testis</tissue>
    </source>
</reference>
<reference key="5">
    <citation type="journal article" date="2014" name="Mol. Cell. Proteomics">
        <title>Immunoaffinity enrichment and mass spectrometry analysis of protein methylation.</title>
        <authorList>
            <person name="Guo A."/>
            <person name="Gu H."/>
            <person name="Zhou J."/>
            <person name="Mulhern D."/>
            <person name="Wang Y."/>
            <person name="Lee K.A."/>
            <person name="Yang V."/>
            <person name="Aguiar M."/>
            <person name="Kornhauser J."/>
            <person name="Jia X."/>
            <person name="Ren J."/>
            <person name="Beausoleil S.A."/>
            <person name="Silva J.C."/>
            <person name="Vemulapalli V."/>
            <person name="Bedford M.T."/>
            <person name="Comb M.J."/>
        </authorList>
    </citation>
    <scope>METHYLATION [LARGE SCALE ANALYSIS] AT ARG-61</scope>
    <scope>IDENTIFICATION BY MASS SPECTROMETRY [LARGE SCALE ANALYSIS]</scope>
    <source>
        <tissue>Brain</tissue>
    </source>
</reference>